<sequence length="723" mass="78028">MSSRPLLTLALSLHDRLDELSNRGQIHLVGYDLDVAAVAAVARHECLPIVNDGEVIARLSESTEILQRSYKGSTTIYGVHTGFGGSADTRPDDSSGLSKGLMQLLQTGVLVVENLDIPGLDTPQDVIPESMPSSWTRATTVVRINQCIRGHSAIRHQTVKSLLKLVAAQITPIVPLRGSISASGDLMPLSYIAGTLEGSPDIYVTKGGGKSAKIISAHDALGEIGMEPLRLGPREGLGLVNGTATSAATASLAVLDAIQLTLLSTGLTCLVSEGMAARVEWLHPFIAETRPHPGQREVAEIMRAFLKGSRLVSGLEGEASTHQHTLNVRPDEGLPQDRYPLRTSPQWLGPQFEDILLAHSQISVELNSTSDNPLTNLKTGAIHHGGNFQATSITSAVEKIRTSLQMVGKLLFSQCTEMINHQMNAGLPPNLAADDPSASFCCKGLDINIAAYQSELSYLSNSISNHVQSAEMHNQAVNSLAFLSTRYTIKAIELLGMMVAGVLYAACQAMDLRVMHATFLETVTATLQKAIADLLPNGFEAEDVERSLASAIRGLRNAWWNNAGSDASERCSLAAVAFVQVLCDPSKHHTDTPKVKVCLDLTAKEMRELQDDVRSHLSQAYHKHHSAFLEKPTTEEYIGEGSKALYLWARQDLGIPMNRGLVDHPSPGSIGKRTIGSYVSMIYQGIQDGRLFQRFATVGREVGLGNGGTNGIRKRAYAEYEIS</sequence>
<organism>
    <name type="scientific">Cochliobolus lunatus</name>
    <name type="common">Filamentous fungus</name>
    <name type="synonym">Curvularia lunata</name>
    <dbReference type="NCBI Taxonomy" id="5503"/>
    <lineage>
        <taxon>Eukaryota</taxon>
        <taxon>Fungi</taxon>
        <taxon>Dikarya</taxon>
        <taxon>Ascomycota</taxon>
        <taxon>Pezizomycotina</taxon>
        <taxon>Dothideomycetes</taxon>
        <taxon>Pleosporomycetidae</taxon>
        <taxon>Pleosporales</taxon>
        <taxon>Pleosporineae</taxon>
        <taxon>Pleosporaceae</taxon>
        <taxon>Curvularia</taxon>
    </lineage>
</organism>
<proteinExistence type="evidence at protein level"/>
<protein>
    <recommendedName>
        <fullName evidence="6">Phenylalanine ammonia-lyase</fullName>
        <shortName evidence="6">PAL</shortName>
        <ecNumber evidence="4">4.3.1.24</ecNumber>
    </recommendedName>
    <alternativeName>
        <fullName evidence="6">Squalestatin S1 biosynthesis cluster protein clz10</fullName>
    </alternativeName>
    <alternativeName>
        <fullName evidence="6">Zaragozic acid A biosynthesis cluster protein 10</fullName>
    </alternativeName>
</protein>
<keyword id="KW-0963">Cytoplasm</keyword>
<keyword id="KW-0456">Lyase</keyword>
<keyword id="KW-0585">Phenylalanine catabolism</keyword>
<keyword id="KW-0587">Phenylpropanoid metabolism</keyword>
<dbReference type="EC" id="4.3.1.24" evidence="4"/>
<dbReference type="EMBL" id="MF806529">
    <property type="protein sequence ID" value="AXF50644.1"/>
    <property type="molecule type" value="Genomic_DNA"/>
</dbReference>
<dbReference type="EMBL" id="MF806533">
    <property type="protein sequence ID" value="AXF50657.1"/>
    <property type="molecule type" value="Genomic_DNA"/>
</dbReference>
<dbReference type="SMR" id="A0A345BJN1"/>
<dbReference type="UniPathway" id="UPA00713">
    <property type="reaction ID" value="UER00725"/>
</dbReference>
<dbReference type="GO" id="GO:0005737">
    <property type="term" value="C:cytoplasm"/>
    <property type="evidence" value="ECO:0007669"/>
    <property type="project" value="UniProtKB-SubCell"/>
</dbReference>
<dbReference type="GO" id="GO:0045548">
    <property type="term" value="F:phenylalanine ammonia-lyase activity"/>
    <property type="evidence" value="ECO:0007669"/>
    <property type="project" value="UniProtKB-EC"/>
</dbReference>
<dbReference type="GO" id="GO:0009800">
    <property type="term" value="P:cinnamic acid biosynthetic process"/>
    <property type="evidence" value="ECO:0007669"/>
    <property type="project" value="UniProtKB-UniPathway"/>
</dbReference>
<dbReference type="GO" id="GO:0006559">
    <property type="term" value="P:L-phenylalanine catabolic process"/>
    <property type="evidence" value="ECO:0007669"/>
    <property type="project" value="UniProtKB-KW"/>
</dbReference>
<dbReference type="CDD" id="cd00332">
    <property type="entry name" value="PAL-HAL"/>
    <property type="match status" value="1"/>
</dbReference>
<dbReference type="Gene3D" id="1.20.200.10">
    <property type="entry name" value="Fumarase/aspartase (Central domain)"/>
    <property type="match status" value="1"/>
</dbReference>
<dbReference type="Gene3D" id="1.10.275.10">
    <property type="entry name" value="Fumarase/aspartase (N-terminal domain)"/>
    <property type="match status" value="1"/>
</dbReference>
<dbReference type="Gene3D" id="1.10.274.20">
    <property type="entry name" value="Phenylalanine ammonia-lyase 1, domain 3"/>
    <property type="match status" value="1"/>
</dbReference>
<dbReference type="InterPro" id="IPR001106">
    <property type="entry name" value="Aromatic_Lyase"/>
</dbReference>
<dbReference type="InterPro" id="IPR024083">
    <property type="entry name" value="Fumarase/histidase_N"/>
</dbReference>
<dbReference type="InterPro" id="IPR008948">
    <property type="entry name" value="L-Aspartase-like"/>
</dbReference>
<dbReference type="InterPro" id="IPR022313">
    <property type="entry name" value="Phe/His_NH3-lyase_AS"/>
</dbReference>
<dbReference type="InterPro" id="IPR005922">
    <property type="entry name" value="Phe_NH3-lyase"/>
</dbReference>
<dbReference type="InterPro" id="IPR023144">
    <property type="entry name" value="Phe_NH3-lyase_shielding_dom_sf"/>
</dbReference>
<dbReference type="NCBIfam" id="TIGR01226">
    <property type="entry name" value="phe_am_lyase"/>
    <property type="match status" value="1"/>
</dbReference>
<dbReference type="PANTHER" id="PTHR10362">
    <property type="entry name" value="HISTIDINE AMMONIA-LYASE"/>
    <property type="match status" value="1"/>
</dbReference>
<dbReference type="Pfam" id="PF00221">
    <property type="entry name" value="Lyase_aromatic"/>
    <property type="match status" value="1"/>
</dbReference>
<dbReference type="SUPFAM" id="SSF48557">
    <property type="entry name" value="L-aspartase-like"/>
    <property type="match status" value="1"/>
</dbReference>
<dbReference type="PROSITE" id="PS00488">
    <property type="entry name" value="PAL_HISTIDASE"/>
    <property type="match status" value="1"/>
</dbReference>
<evidence type="ECO:0000250" key="1">
    <source>
        <dbReference type="UniProtKB" id="A0A3G1DJK5"/>
    </source>
</evidence>
<evidence type="ECO:0000250" key="2">
    <source>
        <dbReference type="UniProtKB" id="P11544"/>
    </source>
</evidence>
<evidence type="ECO:0000250" key="3">
    <source>
        <dbReference type="UniProtKB" id="Q68G84"/>
    </source>
</evidence>
<evidence type="ECO:0000255" key="4">
    <source>
        <dbReference type="RuleBase" id="RU003955"/>
    </source>
</evidence>
<evidence type="ECO:0000269" key="5">
    <source>
    </source>
</evidence>
<evidence type="ECO:0000303" key="6">
    <source>
    </source>
</evidence>
<evidence type="ECO:0000305" key="7"/>
<evidence type="ECO:0000305" key="8">
    <source>
    </source>
</evidence>
<comment type="function">
    <text evidence="1 5 8">Phenylalanine ammonia-lyase; part of the gene cluster that mediates the biosynthesis of squalestatin S1 (SQS1, also known as zaragozic acid A), a heavily oxidized fungal polyketide that offers potent cholesterol lowering activity by targeting squalene synthase (SS) (PubMed:28605916). SQS1 is composed of a 2,8-dioxobicyclic[3.2.1]octane-3,4,5-tricarboxyclic acid core that is connected to two lipophilic polyketide arms (PubMed:28605916). These initial steps feature the priming of an unusual benzoic acid starter unit onto the highly reducing polyketide synthase clz14, followed by oxaloacetate extension and product release to generate a tricarboxylic acid containing product (PubMed:28605916). The phenylalanine ammonia lyase (PAL) clz10 and the acyl-CoA ligase clz12 are involved in transforming phenylalanine into benzoyl-CoA (PubMed:28605916). The citrate synthase-like protein clz17 is involved in connecting the C-alpha-carbons of the hexaketide chain and oxaloacetate to afford the tricarboxylic acid unit (PubMed:28605916). The potential hydrolytic enzymes, clz11 and clz13, are in close proximity to pks2 and may participate in product release (PubMed:28605916). On the other side, the tetraketide arm is synthesized by a the squalestatin tetraketide synthase clz2 and enzymatically esterified to the core in the last biosynthetic step, by the acetyltransferase clz6 (By similarity). The biosynthesis of the tetraketide must involve 3 rounds of chain extension (By similarity). After the first and second rounds methyl-transfer occurs, and in all rounds of extension the ketoreductase and dehydratase are active (By similarity). The enoyl reductase and C-MeT of clz2 are not active in the final round of extension (By similarity). The acetyltransferase clz6 appears to have a broad substrate selectivity for its acyl CoA substrate, allowing the in vitro synthesis of novel squalestatins (By similarity). The biosynthesis of SQS1 requires several oxidative steps likely performed by oxidoreductases clz3, clz15 and clz16 (Probable). Finally, in support of the identification of the cluster as being responsible for SQS1 production, the cluster contains a gene encoding a putative squalene synthase (SS) clz20, suggesting a likely mechanism for self-resistance (Probable).</text>
</comment>
<comment type="catalytic activity">
    <reaction evidence="4">
        <text>L-phenylalanine = (E)-cinnamate + NH4(+)</text>
        <dbReference type="Rhea" id="RHEA:21384"/>
        <dbReference type="ChEBI" id="CHEBI:15669"/>
        <dbReference type="ChEBI" id="CHEBI:28938"/>
        <dbReference type="ChEBI" id="CHEBI:58095"/>
        <dbReference type="EC" id="4.3.1.24"/>
    </reaction>
</comment>
<comment type="pathway">
    <text evidence="5">Secondary metabolite biosynthesis.</text>
</comment>
<comment type="pathway">
    <text evidence="4">Phenylpropanoid metabolism; trans-cinnamate biosynthesis; trans-cinnamate from L-phenylalanine: step 1/1.</text>
</comment>
<comment type="subcellular location">
    <subcellularLocation>
        <location evidence="4">Cytoplasm</location>
    </subcellularLocation>
</comment>
<comment type="PTM">
    <text evidence="3">Contains an active site 4-methylidene-imidazol-5-one (MIO), which is formed autocatalytically by cyclization and dehydration of residues Ala-Ser-Gly.</text>
</comment>
<comment type="similarity">
    <text evidence="7">Belongs to the PAL/histidase family.</text>
</comment>
<name>CLZ10_COCLU</name>
<reference key="1">
    <citation type="journal article" date="2017" name="Org. Lett.">
        <title>Identification and heterologous production of a benzoyl-primed tricarboxylic acid polyketide intermediate from the zaragozic acid A biosynthetic pathway.</title>
        <authorList>
            <person name="Liu N."/>
            <person name="Hung Y.S."/>
            <person name="Gao S.S."/>
            <person name="Hang L."/>
            <person name="Zou Y."/>
            <person name="Chooi Y.H."/>
            <person name="Tang Y."/>
        </authorList>
    </citation>
    <scope>NUCLEOTIDE SEQUENCE [GENOMIC DNA]</scope>
    <scope>FUNCTION</scope>
    <scope>CATALYTIC ACTIVITY</scope>
    <scope>PATHWAY</scope>
    <source>
        <strain>ATCC 74067</strain>
    </source>
</reference>
<feature type="chain" id="PRO_0000452633" description="Phenylalanine ammonia-lyase">
    <location>
        <begin position="1"/>
        <end position="723"/>
    </location>
</feature>
<feature type="active site" description="Proton donor/acceptor" evidence="2">
    <location>
        <position position="77"/>
    </location>
</feature>
<feature type="binding site" evidence="3">
    <location>
        <position position="241"/>
    </location>
    <ligand>
        <name>(E)-cinnamate</name>
        <dbReference type="ChEBI" id="CHEBI:15669"/>
    </ligand>
</feature>
<feature type="binding site" evidence="3">
    <location>
        <position position="336"/>
    </location>
    <ligand>
        <name>(E)-cinnamate</name>
        <dbReference type="ChEBI" id="CHEBI:15669"/>
    </ligand>
</feature>
<feature type="binding site" evidence="3">
    <location>
        <position position="342"/>
    </location>
    <ligand>
        <name>(E)-cinnamate</name>
        <dbReference type="ChEBI" id="CHEBI:15669"/>
    </ligand>
</feature>
<feature type="binding site" evidence="3">
    <location>
        <position position="372"/>
    </location>
    <ligand>
        <name>(E)-cinnamate</name>
        <dbReference type="ChEBI" id="CHEBI:15669"/>
    </ligand>
</feature>
<feature type="binding site" evidence="2">
    <location>
        <position position="443"/>
    </location>
    <ligand>
        <name>(E)-cinnamate</name>
        <dbReference type="ChEBI" id="CHEBI:15669"/>
    </ligand>
</feature>
<feature type="binding site" evidence="2">
    <location>
        <position position="471"/>
    </location>
    <ligand>
        <name>(E)-cinnamate</name>
        <dbReference type="ChEBI" id="CHEBI:15669"/>
    </ligand>
</feature>
<feature type="binding site" evidence="3">
    <location>
        <position position="474"/>
    </location>
    <ligand>
        <name>(E)-cinnamate</name>
        <dbReference type="ChEBI" id="CHEBI:15669"/>
    </ligand>
</feature>
<feature type="modified residue" description="2,3-didehydroalanine (Ser)" evidence="2">
    <location>
        <position position="183"/>
    </location>
</feature>
<feature type="cross-link" description="5-imidazolinone (Ala-Gly)" evidence="2">
    <location>
        <begin position="182"/>
        <end position="184"/>
    </location>
</feature>
<gene>
    <name evidence="6" type="primary">clz10</name>
</gene>
<accession>A0A345BJN1</accession>